<gene>
    <name evidence="1" type="primary">potA</name>
    <name type="ordered locus">UU107</name>
</gene>
<feature type="chain" id="PRO_0000286322" description="Spermidine/putrescine import ATP-binding protein PotA">
    <location>
        <begin position="1"/>
        <end position="519"/>
    </location>
</feature>
<feature type="domain" description="ABC transporter" evidence="1">
    <location>
        <begin position="6"/>
        <end position="401"/>
    </location>
</feature>
<feature type="region of interest" description="Insert">
    <location>
        <begin position="107"/>
        <end position="270"/>
    </location>
</feature>
<feature type="binding site" evidence="1">
    <location>
        <begin position="39"/>
        <end position="46"/>
    </location>
    <ligand>
        <name>ATP</name>
        <dbReference type="ChEBI" id="CHEBI:30616"/>
    </ligand>
</feature>
<dbReference type="EC" id="7.6.2.11" evidence="1"/>
<dbReference type="EMBL" id="AF222894">
    <property type="protein sequence ID" value="AAF30513.1"/>
    <property type="molecule type" value="Genomic_DNA"/>
</dbReference>
<dbReference type="RefSeq" id="WP_006688552.1">
    <property type="nucleotide sequence ID" value="NC_002162.1"/>
</dbReference>
<dbReference type="SMR" id="Q9PR37"/>
<dbReference type="STRING" id="273119.UU107"/>
<dbReference type="EnsemblBacteria" id="AAF30513">
    <property type="protein sequence ID" value="AAF30513"/>
    <property type="gene ID" value="UU107"/>
</dbReference>
<dbReference type="GeneID" id="29672145"/>
<dbReference type="KEGG" id="uur:UU107"/>
<dbReference type="eggNOG" id="COG3842">
    <property type="taxonomic scope" value="Bacteria"/>
</dbReference>
<dbReference type="HOGENOM" id="CLU_000604_1_1_14"/>
<dbReference type="OrthoDB" id="9802264at2"/>
<dbReference type="Proteomes" id="UP000000423">
    <property type="component" value="Chromosome"/>
</dbReference>
<dbReference type="GO" id="GO:0043190">
    <property type="term" value="C:ATP-binding cassette (ABC) transporter complex"/>
    <property type="evidence" value="ECO:0007669"/>
    <property type="project" value="InterPro"/>
</dbReference>
<dbReference type="GO" id="GO:0015417">
    <property type="term" value="F:ABC-type polyamine transporter activity"/>
    <property type="evidence" value="ECO:0007669"/>
    <property type="project" value="UniProtKB-EC"/>
</dbReference>
<dbReference type="GO" id="GO:0005524">
    <property type="term" value="F:ATP binding"/>
    <property type="evidence" value="ECO:0007669"/>
    <property type="project" value="UniProtKB-KW"/>
</dbReference>
<dbReference type="GO" id="GO:0016887">
    <property type="term" value="F:ATP hydrolysis activity"/>
    <property type="evidence" value="ECO:0007669"/>
    <property type="project" value="InterPro"/>
</dbReference>
<dbReference type="Gene3D" id="2.40.50.100">
    <property type="match status" value="1"/>
</dbReference>
<dbReference type="Gene3D" id="3.40.50.300">
    <property type="entry name" value="P-loop containing nucleotide triphosphate hydrolases"/>
    <property type="match status" value="2"/>
</dbReference>
<dbReference type="InterPro" id="IPR003593">
    <property type="entry name" value="AAA+_ATPase"/>
</dbReference>
<dbReference type="InterPro" id="IPR050093">
    <property type="entry name" value="ABC_SmlMolc_Importer"/>
</dbReference>
<dbReference type="InterPro" id="IPR003439">
    <property type="entry name" value="ABC_transporter-like_ATP-bd"/>
</dbReference>
<dbReference type="InterPro" id="IPR017871">
    <property type="entry name" value="ABC_transporter-like_CS"/>
</dbReference>
<dbReference type="InterPro" id="IPR008995">
    <property type="entry name" value="Mo/tungstate-bd_C_term_dom"/>
</dbReference>
<dbReference type="InterPro" id="IPR027417">
    <property type="entry name" value="P-loop_NTPase"/>
</dbReference>
<dbReference type="InterPro" id="IPR013611">
    <property type="entry name" value="Transp-assoc_OB_typ2"/>
</dbReference>
<dbReference type="PANTHER" id="PTHR42781">
    <property type="entry name" value="SPERMIDINE/PUTRESCINE IMPORT ATP-BINDING PROTEIN POTA"/>
    <property type="match status" value="1"/>
</dbReference>
<dbReference type="PANTHER" id="PTHR42781:SF4">
    <property type="entry name" value="SPERMIDINE_PUTRESCINE IMPORT ATP-BINDING PROTEIN POTA"/>
    <property type="match status" value="1"/>
</dbReference>
<dbReference type="Pfam" id="PF00005">
    <property type="entry name" value="ABC_tran"/>
    <property type="match status" value="2"/>
</dbReference>
<dbReference type="Pfam" id="PF08402">
    <property type="entry name" value="TOBE_2"/>
    <property type="match status" value="1"/>
</dbReference>
<dbReference type="SMART" id="SM00382">
    <property type="entry name" value="AAA"/>
    <property type="match status" value="1"/>
</dbReference>
<dbReference type="SUPFAM" id="SSF50331">
    <property type="entry name" value="MOP-like"/>
    <property type="match status" value="1"/>
</dbReference>
<dbReference type="SUPFAM" id="SSF52540">
    <property type="entry name" value="P-loop containing nucleoside triphosphate hydrolases"/>
    <property type="match status" value="1"/>
</dbReference>
<dbReference type="PROSITE" id="PS00211">
    <property type="entry name" value="ABC_TRANSPORTER_1"/>
    <property type="match status" value="1"/>
</dbReference>
<dbReference type="PROSITE" id="PS50893">
    <property type="entry name" value="ABC_TRANSPORTER_2"/>
    <property type="match status" value="1"/>
</dbReference>
<dbReference type="PROSITE" id="PS51305">
    <property type="entry name" value="POTA"/>
    <property type="match status" value="1"/>
</dbReference>
<accession>Q9PR37</accession>
<organism>
    <name type="scientific">Ureaplasma parvum serovar 3 (strain ATCC 700970)</name>
    <dbReference type="NCBI Taxonomy" id="273119"/>
    <lineage>
        <taxon>Bacteria</taxon>
        <taxon>Bacillati</taxon>
        <taxon>Mycoplasmatota</taxon>
        <taxon>Mycoplasmoidales</taxon>
        <taxon>Mycoplasmoidaceae</taxon>
        <taxon>Ureaplasma</taxon>
    </lineage>
</organism>
<name>POTA_UREPA</name>
<keyword id="KW-0067">ATP-binding</keyword>
<keyword id="KW-1003">Cell membrane</keyword>
<keyword id="KW-0472">Membrane</keyword>
<keyword id="KW-0547">Nucleotide-binding</keyword>
<keyword id="KW-1185">Reference proteome</keyword>
<keyword id="KW-1278">Translocase</keyword>
<keyword id="KW-0813">Transport</keyword>
<sequence>MEKTLLHLRDITKIYDDGFAAVNKFDLKIKKGEFVTLLGPSGCGKTTMLKIIAGFEQPTNGKILYNGIDIKDMPIRLRPTSTVFQDYALFPNMTVKQNIKYGLKLMRKPKDNVDQSIYLQADKVYNSASKKANEKIKELKKQRRGLLAEIKKMDLKYQKNKNIFEIKEMRKNQYLGTLDELYQKQGINKNGKPGFLNYFKSWFSHEKLNLNDPIDREIFNLKKAYKEKSGLDKRYDKITYKYNDLDYWESYWATYPQLKKEQFENKNITRLLTKEEVEKEANRVINLVGLSARKDSYPSDLSGGMQQRVALARSLVIQPEIILLDEPLSALDAKVRKQLQDELKKLHKNLGITFILVTHDQEEALSLSDKVVVMSNGQIEQVGKPSDIYDSPNSLWVANFIGKTNIFEGHYIAKGEVEFDGITSKTDVINGFSENEACYIMIRPEDFDVVKKDEGSINARVESVLYKGLMWDIKCKYNDMIISVEGVNKVNEGDEIGLDWDDIDVHVIKKDYLNNEQAI</sequence>
<reference key="1">
    <citation type="journal article" date="2000" name="Nature">
        <title>The complete sequence of the mucosal pathogen Ureaplasma urealyticum.</title>
        <authorList>
            <person name="Glass J.I."/>
            <person name="Lefkowitz E.J."/>
            <person name="Glass J.S."/>
            <person name="Heiner C.R."/>
            <person name="Chen E.Y."/>
            <person name="Cassell G.H."/>
        </authorList>
    </citation>
    <scope>NUCLEOTIDE SEQUENCE [LARGE SCALE GENOMIC DNA]</scope>
    <source>
        <strain>ATCC 700970</strain>
    </source>
</reference>
<comment type="function">
    <text evidence="1">Part of the ABC transporter complex PotABCD involved in spermidine/putrescine import. Responsible for energy coupling to the transport system.</text>
</comment>
<comment type="catalytic activity">
    <reaction evidence="1">
        <text>ATP + H2O + polyamine-[polyamine-binding protein]Side 1 = ADP + phosphate + polyamineSide 2 + [polyamine-binding protein]Side 1.</text>
        <dbReference type="EC" id="7.6.2.11"/>
    </reaction>
</comment>
<comment type="subunit">
    <text evidence="1">The complex is composed of two ATP-binding proteins (PotA), two transmembrane proteins (PotB and PotC) and a solute-binding protein (PotD).</text>
</comment>
<comment type="subcellular location">
    <subcellularLocation>
        <location evidence="1">Cell membrane</location>
        <topology evidence="1">Peripheral membrane protein</topology>
    </subcellularLocation>
</comment>
<comment type="similarity">
    <text evidence="1">Belongs to the ABC transporter superfamily. Spermidine/putrescine importer (TC 3.A.1.11.1) family.</text>
</comment>
<proteinExistence type="inferred from homology"/>
<evidence type="ECO:0000255" key="1">
    <source>
        <dbReference type="HAMAP-Rule" id="MF_01726"/>
    </source>
</evidence>
<protein>
    <recommendedName>
        <fullName evidence="1">Spermidine/putrescine import ATP-binding protein PotA</fullName>
        <ecNumber evidence="1">7.6.2.11</ecNumber>
    </recommendedName>
</protein>